<gene>
    <name evidence="11" type="primary">rtn2</name>
    <name type="ORF">TTpA029b01</name>
    <name type="ORF">TTpA048i08</name>
</gene>
<accession>Q4FZ58</accession>
<accession>Q4FZ59</accession>
<proteinExistence type="evidence at transcript level"/>
<reference evidence="10" key="1">
    <citation type="submission" date="2003-11" db="EMBL/GenBank/DDBJ databases">
        <authorList>
            <consortium name="Sanger Xenopus tropicalis EST/cDNA project"/>
        </authorList>
    </citation>
    <scope>NUCLEOTIDE SEQUENCE [LARGE SCALE MRNA] (ISOFORM C)</scope>
    <scope>NUCLEOTIDE SEQUENCE [LARGE SCALE MRNA] OF 162-321</scope>
    <source>
        <tissue>Tadpole</tissue>
    </source>
</reference>
<reference evidence="10" key="2">
    <citation type="submission" date="2003-08" db="EMBL/GenBank/DDBJ databases">
        <authorList>
            <consortium name="NIH - Xenopus Gene Collection (XGC) project"/>
        </authorList>
    </citation>
    <scope>NUCLEOTIDE SEQUENCE [LARGE SCALE MRNA] OF 1-260 (ISOFORM B)</scope>
    <source>
        <tissue>Neurula</tissue>
    </source>
</reference>
<reference evidence="10 11" key="3">
    <citation type="journal article" date="2005" name="Mol. Biol. Evol.">
        <title>Analysis of the reticulon gene family demonstrates the absence of the neurite growth inhibitor Nogo-A in fish.</title>
        <authorList>
            <person name="Diekmann H."/>
            <person name="Klinger M."/>
            <person name="Oertle T."/>
            <person name="Heinz D."/>
            <person name="Pogoda H.-M."/>
            <person name="Schwab M.E."/>
            <person name="Stuermer C.A.O."/>
        </authorList>
    </citation>
    <scope>IDENTIFICATION (ISOFORMS B AND C)</scope>
</reference>
<sequence>MGHVLSFTHCKDAPSTASSTPDSCPPEGEEDDSPVTEVNFWPLPSPHEPTFSYITIGSTAPLSRPPVRARRGLGQSRVHAAPREETEEKEVKDVVTYVLLEKTCQLKKLSPPHVQEEVVFVAKPQPQLEVFRAVKDLLYWRDILLSAGCLTGVTLSLLCLSQFSVISVFAYGCLIILSVTLTLRLYTKLLHALKRGNGANPFQYYLDADLKLTTKQAEEITARVLSLLSTTICTLRSLFLVEELKDSLKFLVIIYLLTYVGAVFNGITVLLLCVIGAFTFPILYKQHQTQVDHYVSLVSKKGNAFRSKIQGTVKKPPAKQK</sequence>
<comment type="function">
    <text evidence="1 2 4">Inhibits amyloid precursor protein processing, probably by blocking BACE1 activity (By similarity). Enhances trafficking of the glutamate transporter SLC1A1/EAAC1 from the endoplasmic reticulum to the cell surface (By similarity). Plays a role in the translocation of SLC2A4/GLUT4 from intracellular membranes to the cell membrane which facilitates the uptake of glucose into the cell (By similarity).</text>
</comment>
<comment type="subcellular location">
    <subcellularLocation>
        <location evidence="3">Endoplasmic reticulum membrane</location>
        <topology evidence="5">Multi-pass membrane protein</topology>
    </subcellularLocation>
    <subcellularLocation>
        <location evidence="1">Sarcoplasmic reticulum membrane</location>
        <topology evidence="5">Multi-pass membrane protein</topology>
    </subcellularLocation>
    <subcellularLocation>
        <location evidence="4">Cell membrane</location>
        <topology evidence="5">Multi-pass membrane protein</topology>
    </subcellularLocation>
    <subcellularLocation>
        <location evidence="1">Cell membrane</location>
        <location evidence="1">Sarcolemma</location>
        <topology evidence="5">Multi-pass membrane protein</topology>
    </subcellularLocation>
    <subcellularLocation>
        <location evidence="1">Cell membrane</location>
        <location evidence="1">Sarcolemma</location>
        <location evidence="1">T-tubule</location>
        <topology evidence="5">Multi-pass membrane protein</topology>
    </subcellularLocation>
    <subcellularLocation>
        <location evidence="1">Cytoplasm</location>
        <location evidence="1">Myofibril</location>
        <location evidence="1">Sarcomere</location>
        <location evidence="1">Z line</location>
    </subcellularLocation>
    <subcellularLocation>
        <location evidence="1">Cytoplasm</location>
        <location evidence="1">Cytoskeleton</location>
    </subcellularLocation>
</comment>
<comment type="alternative products">
    <event type="alternative splicing"/>
    <isoform>
        <id>Q4FZ58-1</id>
        <name>B</name>
        <name evidence="8">A</name>
        <sequence type="displayed"/>
    </isoform>
    <isoform>
        <id>Q4FZ58-2</id>
        <name>C</name>
        <sequence type="described" ref="VSP_052656 VSP_052657"/>
    </isoform>
</comment>
<comment type="sequence caution" evidence="10">
    <conflict type="frameshift">
        <sequence resource="EMBL" id="CF264052"/>
    </conflict>
</comment>
<comment type="sequence caution" evidence="10">
    <conflict type="miscellaneous discrepancy">
        <sequence resource="EMBL" id="CF264052"/>
    </conflict>
    <text>Contaminating sequence. Sequence of unknown origin in the C-terminal part.</text>
</comment>
<keyword id="KW-0025">Alternative splicing</keyword>
<keyword id="KW-1003">Cell membrane</keyword>
<keyword id="KW-0963">Cytoplasm</keyword>
<keyword id="KW-0206">Cytoskeleton</keyword>
<keyword id="KW-0256">Endoplasmic reticulum</keyword>
<keyword id="KW-0472">Membrane</keyword>
<keyword id="KW-1185">Reference proteome</keyword>
<keyword id="KW-0703">Sarcoplasmic reticulum</keyword>
<keyword id="KW-0812">Transmembrane</keyword>
<keyword id="KW-1133">Transmembrane helix</keyword>
<organism>
    <name type="scientific">Xenopus tropicalis</name>
    <name type="common">Western clawed frog</name>
    <name type="synonym">Silurana tropicalis</name>
    <dbReference type="NCBI Taxonomy" id="8364"/>
    <lineage>
        <taxon>Eukaryota</taxon>
        <taxon>Metazoa</taxon>
        <taxon>Chordata</taxon>
        <taxon>Craniata</taxon>
        <taxon>Vertebrata</taxon>
        <taxon>Euteleostomi</taxon>
        <taxon>Amphibia</taxon>
        <taxon>Batrachia</taxon>
        <taxon>Anura</taxon>
        <taxon>Pipoidea</taxon>
        <taxon>Pipidae</taxon>
        <taxon>Xenopodinae</taxon>
        <taxon>Xenopus</taxon>
        <taxon>Silurana</taxon>
    </lineage>
</organism>
<protein>
    <recommendedName>
        <fullName>Reticulon-2</fullName>
    </recommendedName>
</protein>
<feature type="chain" id="PRO_0000316859" description="Reticulon-2">
    <location>
        <begin position="1"/>
        <end position="321"/>
    </location>
</feature>
<feature type="transmembrane region" description="Helical" evidence="5">
    <location>
        <begin position="163"/>
        <end position="183"/>
    </location>
</feature>
<feature type="transmembrane region" description="Helical" evidence="5">
    <location>
        <begin position="250"/>
        <end position="270"/>
    </location>
</feature>
<feature type="domain" description="Reticulon" evidence="6">
    <location>
        <begin position="134"/>
        <end position="321"/>
    </location>
</feature>
<feature type="region of interest" description="Disordered" evidence="7">
    <location>
        <begin position="1"/>
        <end position="36"/>
    </location>
</feature>
<feature type="region of interest" description="Disordered" evidence="7">
    <location>
        <begin position="65"/>
        <end position="85"/>
    </location>
</feature>
<feature type="splice variant" id="VSP_052656" description="In isoform C." evidence="9">
    <location>
        <begin position="1"/>
        <end position="129"/>
    </location>
</feature>
<feature type="splice variant" id="VSP_052657" description="In isoform C." evidence="9">
    <original>VFR</original>
    <variation>MNK</variation>
    <location>
        <begin position="130"/>
        <end position="132"/>
    </location>
</feature>
<feature type="sequence conflict" description="In Ref. 1; BX734625." evidence="10" ref="1">
    <original>S</original>
    <variation>F</variation>
    <location>
        <position position="229"/>
    </location>
</feature>
<feature type="sequence conflict" description="In Ref. 1; BX734625." evidence="10" ref="1">
    <original>H</original>
    <variation>P</variation>
    <location>
        <position position="287"/>
    </location>
</feature>
<feature type="sequence conflict" description="In Ref. 1; BX724945." evidence="10" ref="1">
    <original>G</original>
    <variation>V</variation>
    <location>
        <position position="302"/>
    </location>
</feature>
<evidence type="ECO:0000250" key="1">
    <source>
        <dbReference type="UniProtKB" id="O70622"/>
    </source>
</evidence>
<evidence type="ECO:0000250" key="2">
    <source>
        <dbReference type="UniProtKB" id="O75298"/>
    </source>
</evidence>
<evidence type="ECO:0000250" key="3">
    <source>
        <dbReference type="UniProtKB" id="Q4FZ76"/>
    </source>
</evidence>
<evidence type="ECO:0000250" key="4">
    <source>
        <dbReference type="UniProtKB" id="Q6WN19"/>
    </source>
</evidence>
<evidence type="ECO:0000255" key="5"/>
<evidence type="ECO:0000255" key="6">
    <source>
        <dbReference type="PROSITE-ProRule" id="PRU00170"/>
    </source>
</evidence>
<evidence type="ECO:0000256" key="7">
    <source>
        <dbReference type="SAM" id="MobiDB-lite"/>
    </source>
</evidence>
<evidence type="ECO:0000269" key="8">
    <source>
    </source>
</evidence>
<evidence type="ECO:0000303" key="9">
    <source ref="1"/>
</evidence>
<evidence type="ECO:0000305" key="10"/>
<evidence type="ECO:0000312" key="11">
    <source>
        <dbReference type="EMBL" id="DAA05191.1"/>
    </source>
</evidence>
<name>RTN2_XENTR</name>
<dbReference type="EMBL" id="BX724945">
    <property type="status" value="NOT_ANNOTATED_CDS"/>
    <property type="molecule type" value="mRNA"/>
</dbReference>
<dbReference type="EMBL" id="BX734625">
    <property type="status" value="NOT_ANNOTATED_CDS"/>
    <property type="molecule type" value="mRNA"/>
</dbReference>
<dbReference type="EMBL" id="CF264052">
    <property type="status" value="NOT_ANNOTATED_CDS"/>
    <property type="molecule type" value="mRNA"/>
</dbReference>
<dbReference type="EMBL" id="BK005002">
    <property type="protein sequence ID" value="DAA05190.1"/>
    <property type="molecule type" value="mRNA"/>
</dbReference>
<dbReference type="EMBL" id="BK005003">
    <property type="protein sequence ID" value="DAA05191.1"/>
    <property type="molecule type" value="mRNA"/>
</dbReference>
<dbReference type="RefSeq" id="NP_001107739.1">
    <property type="nucleotide sequence ID" value="NM_001114267.2"/>
</dbReference>
<dbReference type="FunCoup" id="Q4FZ58">
    <property type="interactions" value="340"/>
</dbReference>
<dbReference type="STRING" id="8364.ENSXETP00000040236"/>
<dbReference type="PaxDb" id="8364-ENSXETP00000060227"/>
<dbReference type="GeneID" id="100135745"/>
<dbReference type="KEGG" id="xtr:100135745"/>
<dbReference type="AGR" id="Xenbase:XB-GENE-941644"/>
<dbReference type="CTD" id="6253"/>
<dbReference type="Xenbase" id="XB-GENE-941644">
    <property type="gene designation" value="rtn2"/>
</dbReference>
<dbReference type="eggNOG" id="KOG1792">
    <property type="taxonomic scope" value="Eukaryota"/>
</dbReference>
<dbReference type="InParanoid" id="Q4FZ58"/>
<dbReference type="OrthoDB" id="567788at2759"/>
<dbReference type="Proteomes" id="UP000008143">
    <property type="component" value="Chromosome 8"/>
</dbReference>
<dbReference type="GO" id="GO:0005882">
    <property type="term" value="C:intermediate filament"/>
    <property type="evidence" value="ECO:0000250"/>
    <property type="project" value="UniProtKB"/>
</dbReference>
<dbReference type="GO" id="GO:0033017">
    <property type="term" value="C:sarcoplasmic reticulum membrane"/>
    <property type="evidence" value="ECO:0007669"/>
    <property type="project" value="UniProtKB-SubCell"/>
</dbReference>
<dbReference type="GO" id="GO:0030315">
    <property type="term" value="C:T-tubule"/>
    <property type="evidence" value="ECO:0000250"/>
    <property type="project" value="UniProtKB"/>
</dbReference>
<dbReference type="GO" id="GO:0014802">
    <property type="term" value="C:terminal cisterna"/>
    <property type="evidence" value="ECO:0000250"/>
    <property type="project" value="UniProtKB"/>
</dbReference>
<dbReference type="GO" id="GO:0030018">
    <property type="term" value="C:Z disc"/>
    <property type="evidence" value="ECO:0000250"/>
    <property type="project" value="UniProtKB"/>
</dbReference>
<dbReference type="GO" id="GO:0065002">
    <property type="term" value="P:intracellular protein transmembrane transport"/>
    <property type="evidence" value="ECO:0000250"/>
    <property type="project" value="UniProtKB"/>
</dbReference>
<dbReference type="GO" id="GO:1902430">
    <property type="term" value="P:negative regulation of amyloid-beta formation"/>
    <property type="evidence" value="ECO:0000250"/>
    <property type="project" value="UniProtKB"/>
</dbReference>
<dbReference type="GO" id="GO:0046324">
    <property type="term" value="P:regulation of D-glucose import"/>
    <property type="evidence" value="ECO:0000250"/>
    <property type="project" value="UniProtKB"/>
</dbReference>
<dbReference type="Gene3D" id="1.20.5.2480">
    <property type="match status" value="1"/>
</dbReference>
<dbReference type="InterPro" id="IPR003388">
    <property type="entry name" value="Reticulon"/>
</dbReference>
<dbReference type="InterPro" id="IPR046964">
    <property type="entry name" value="RTN1-4"/>
</dbReference>
<dbReference type="PANTHER" id="PTHR45799:SF4">
    <property type="entry name" value="RETICULON-3"/>
    <property type="match status" value="1"/>
</dbReference>
<dbReference type="PANTHER" id="PTHR45799">
    <property type="entry name" value="RETICULON-LIKE PROTEIN"/>
    <property type="match status" value="1"/>
</dbReference>
<dbReference type="Pfam" id="PF02453">
    <property type="entry name" value="Reticulon"/>
    <property type="match status" value="1"/>
</dbReference>
<dbReference type="PROSITE" id="PS50845">
    <property type="entry name" value="RETICULON"/>
    <property type="match status" value="1"/>
</dbReference>